<reference key="1">
    <citation type="submission" date="2006-12" db="EMBL/GenBank/DDBJ databases">
        <title>Complete sequence of Shewanella amazonensis SB2B.</title>
        <authorList>
            <consortium name="US DOE Joint Genome Institute"/>
            <person name="Copeland A."/>
            <person name="Lucas S."/>
            <person name="Lapidus A."/>
            <person name="Barry K."/>
            <person name="Detter J.C."/>
            <person name="Glavina del Rio T."/>
            <person name="Hammon N."/>
            <person name="Israni S."/>
            <person name="Dalin E."/>
            <person name="Tice H."/>
            <person name="Pitluck S."/>
            <person name="Munk A.C."/>
            <person name="Brettin T."/>
            <person name="Bruce D."/>
            <person name="Han C."/>
            <person name="Tapia R."/>
            <person name="Gilna P."/>
            <person name="Schmutz J."/>
            <person name="Larimer F."/>
            <person name="Land M."/>
            <person name="Hauser L."/>
            <person name="Kyrpides N."/>
            <person name="Mikhailova N."/>
            <person name="Fredrickson J."/>
            <person name="Richardson P."/>
        </authorList>
    </citation>
    <scope>NUCLEOTIDE SEQUENCE [LARGE SCALE GENOMIC DNA]</scope>
    <source>
        <strain>ATCC BAA-1098 / SB2B</strain>
    </source>
</reference>
<evidence type="ECO:0000255" key="1">
    <source>
        <dbReference type="HAMAP-Rule" id="MF_00154"/>
    </source>
</evidence>
<gene>
    <name evidence="1" type="primary">cyoE</name>
    <name type="ordered locus">Sama_3491</name>
</gene>
<protein>
    <recommendedName>
        <fullName evidence="1">Protoheme IX farnesyltransferase</fullName>
        <ecNumber evidence="1">2.5.1.141</ecNumber>
    </recommendedName>
    <alternativeName>
        <fullName evidence="1">Heme B farnesyltransferase</fullName>
    </alternativeName>
    <alternativeName>
        <fullName evidence="1">Heme O synthase</fullName>
    </alternativeName>
</protein>
<sequence>MAKSLSITPVSGLSRLPWRAYLEMTKPKVVTLMLLTVLVGMCLALPGAVPLQPLIAGMLGIAMMAGAAAAMNHLIDRRIDGLMARTYNRPLPKGKVPVSHAATFAALLALLGFACLYWLVNPLTAWLTLASLLGYAVVYTAYLKRATPQNIVIGGLAGAMPPLLGWTAVTNDFHGHGLLLVIIIFAWTPPHFWALAIHRKADYAKVDIPMLPVTHGVAFTKTCIFLYTILLALACLLPVLVGMSGALYLLGSTLLSIGFIYKAWQLKYHETPGMAMDVFRFSIYHLMLLFILLLVDHYI</sequence>
<organism>
    <name type="scientific">Shewanella amazonensis (strain ATCC BAA-1098 / SB2B)</name>
    <dbReference type="NCBI Taxonomy" id="326297"/>
    <lineage>
        <taxon>Bacteria</taxon>
        <taxon>Pseudomonadati</taxon>
        <taxon>Pseudomonadota</taxon>
        <taxon>Gammaproteobacteria</taxon>
        <taxon>Alteromonadales</taxon>
        <taxon>Shewanellaceae</taxon>
        <taxon>Shewanella</taxon>
    </lineage>
</organism>
<name>CYOE_SHEAM</name>
<feature type="chain" id="PRO_0000326940" description="Protoheme IX farnesyltransferase">
    <location>
        <begin position="1"/>
        <end position="299"/>
    </location>
</feature>
<feature type="transmembrane region" description="Helical" evidence="1">
    <location>
        <begin position="29"/>
        <end position="49"/>
    </location>
</feature>
<feature type="transmembrane region" description="Helical" evidence="1">
    <location>
        <begin position="51"/>
        <end position="71"/>
    </location>
</feature>
<feature type="transmembrane region" description="Helical" evidence="1">
    <location>
        <begin position="100"/>
        <end position="120"/>
    </location>
</feature>
<feature type="transmembrane region" description="Helical" evidence="1">
    <location>
        <begin position="123"/>
        <end position="143"/>
    </location>
</feature>
<feature type="transmembrane region" description="Helical" evidence="1">
    <location>
        <begin position="150"/>
        <end position="170"/>
    </location>
</feature>
<feature type="transmembrane region" description="Helical" evidence="1">
    <location>
        <begin position="177"/>
        <end position="197"/>
    </location>
</feature>
<feature type="transmembrane region" description="Helical" evidence="1">
    <location>
        <begin position="223"/>
        <end position="243"/>
    </location>
</feature>
<feature type="transmembrane region" description="Helical" evidence="1">
    <location>
        <begin position="244"/>
        <end position="264"/>
    </location>
</feature>
<feature type="transmembrane region" description="Helical" evidence="1">
    <location>
        <begin position="275"/>
        <end position="295"/>
    </location>
</feature>
<keyword id="KW-0997">Cell inner membrane</keyword>
<keyword id="KW-1003">Cell membrane</keyword>
<keyword id="KW-0350">Heme biosynthesis</keyword>
<keyword id="KW-0472">Membrane</keyword>
<keyword id="KW-1185">Reference proteome</keyword>
<keyword id="KW-0808">Transferase</keyword>
<keyword id="KW-0812">Transmembrane</keyword>
<keyword id="KW-1133">Transmembrane helix</keyword>
<dbReference type="EC" id="2.5.1.141" evidence="1"/>
<dbReference type="EMBL" id="CP000507">
    <property type="protein sequence ID" value="ABM01694.1"/>
    <property type="molecule type" value="Genomic_DNA"/>
</dbReference>
<dbReference type="RefSeq" id="WP_011761597.1">
    <property type="nucleotide sequence ID" value="NC_008700.1"/>
</dbReference>
<dbReference type="SMR" id="A1SBD7"/>
<dbReference type="STRING" id="326297.Sama_3491"/>
<dbReference type="KEGG" id="saz:Sama_3491"/>
<dbReference type="eggNOG" id="COG0109">
    <property type="taxonomic scope" value="Bacteria"/>
</dbReference>
<dbReference type="HOGENOM" id="CLU_029631_0_2_6"/>
<dbReference type="OrthoDB" id="9814417at2"/>
<dbReference type="UniPathway" id="UPA00834">
    <property type="reaction ID" value="UER00712"/>
</dbReference>
<dbReference type="Proteomes" id="UP000009175">
    <property type="component" value="Chromosome"/>
</dbReference>
<dbReference type="GO" id="GO:0005886">
    <property type="term" value="C:plasma membrane"/>
    <property type="evidence" value="ECO:0007669"/>
    <property type="project" value="UniProtKB-SubCell"/>
</dbReference>
<dbReference type="GO" id="GO:0008495">
    <property type="term" value="F:protoheme IX farnesyltransferase activity"/>
    <property type="evidence" value="ECO:0007669"/>
    <property type="project" value="UniProtKB-UniRule"/>
</dbReference>
<dbReference type="GO" id="GO:0048034">
    <property type="term" value="P:heme O biosynthetic process"/>
    <property type="evidence" value="ECO:0007669"/>
    <property type="project" value="UniProtKB-UniRule"/>
</dbReference>
<dbReference type="CDD" id="cd13957">
    <property type="entry name" value="PT_UbiA_Cox10"/>
    <property type="match status" value="1"/>
</dbReference>
<dbReference type="FunFam" id="1.10.357.140:FF:000001">
    <property type="entry name" value="Protoheme IX farnesyltransferase"/>
    <property type="match status" value="1"/>
</dbReference>
<dbReference type="Gene3D" id="1.10.357.140">
    <property type="entry name" value="UbiA prenyltransferase"/>
    <property type="match status" value="1"/>
</dbReference>
<dbReference type="HAMAP" id="MF_00154">
    <property type="entry name" value="CyoE_CtaB"/>
    <property type="match status" value="1"/>
</dbReference>
<dbReference type="InterPro" id="IPR006369">
    <property type="entry name" value="Protohaem_IX_farnesylTrfase"/>
</dbReference>
<dbReference type="InterPro" id="IPR000537">
    <property type="entry name" value="UbiA_prenyltransferase"/>
</dbReference>
<dbReference type="InterPro" id="IPR030470">
    <property type="entry name" value="UbiA_prenylTrfase_CS"/>
</dbReference>
<dbReference type="InterPro" id="IPR044878">
    <property type="entry name" value="UbiA_sf"/>
</dbReference>
<dbReference type="NCBIfam" id="TIGR01473">
    <property type="entry name" value="cyoE_ctaB"/>
    <property type="match status" value="1"/>
</dbReference>
<dbReference type="NCBIfam" id="NF003349">
    <property type="entry name" value="PRK04375.1-2"/>
    <property type="match status" value="1"/>
</dbReference>
<dbReference type="PANTHER" id="PTHR43448:SF7">
    <property type="entry name" value="4-HYDROXYBENZOATE SOLANESYLTRANSFERASE"/>
    <property type="match status" value="1"/>
</dbReference>
<dbReference type="PANTHER" id="PTHR43448">
    <property type="entry name" value="PROTOHEME IX FARNESYLTRANSFERASE, MITOCHONDRIAL"/>
    <property type="match status" value="1"/>
</dbReference>
<dbReference type="Pfam" id="PF01040">
    <property type="entry name" value="UbiA"/>
    <property type="match status" value="1"/>
</dbReference>
<dbReference type="PROSITE" id="PS00943">
    <property type="entry name" value="UBIA"/>
    <property type="match status" value="1"/>
</dbReference>
<comment type="function">
    <text evidence="1">Converts heme B (protoheme IX) to heme O by substitution of the vinyl group on carbon 2 of heme B porphyrin ring with a hydroxyethyl farnesyl side group.</text>
</comment>
<comment type="catalytic activity">
    <reaction evidence="1">
        <text>heme b + (2E,6E)-farnesyl diphosphate + H2O = Fe(II)-heme o + diphosphate</text>
        <dbReference type="Rhea" id="RHEA:28070"/>
        <dbReference type="ChEBI" id="CHEBI:15377"/>
        <dbReference type="ChEBI" id="CHEBI:33019"/>
        <dbReference type="ChEBI" id="CHEBI:60344"/>
        <dbReference type="ChEBI" id="CHEBI:60530"/>
        <dbReference type="ChEBI" id="CHEBI:175763"/>
        <dbReference type="EC" id="2.5.1.141"/>
    </reaction>
</comment>
<comment type="pathway">
    <text evidence="1">Porphyrin-containing compound metabolism; heme O biosynthesis; heme O from protoheme: step 1/1.</text>
</comment>
<comment type="subcellular location">
    <subcellularLocation>
        <location evidence="1">Cell inner membrane</location>
        <topology evidence="1">Multi-pass membrane protein</topology>
    </subcellularLocation>
</comment>
<comment type="miscellaneous">
    <text evidence="1">Carbon 2 of the heme B porphyrin ring is defined according to the Fischer nomenclature.</text>
</comment>
<comment type="similarity">
    <text evidence="1">Belongs to the UbiA prenyltransferase family. Protoheme IX farnesyltransferase subfamily.</text>
</comment>
<proteinExistence type="inferred from homology"/>
<accession>A1SBD7</accession>